<keyword id="KW-0378">Hydrolase</keyword>
<keyword id="KW-0496">Mitochondrion</keyword>
<keyword id="KW-1185">Reference proteome</keyword>
<keyword id="KW-0809">Transit peptide</keyword>
<comment type="function">
    <text evidence="2 3">Catalyzes the hydrolysis of diacylglycerol in vitro and may function as a key regulator in lipid metabolism, namely by regulating the intracellular levels of diacylglycerol (By similarity). 1,2-diacyl-sn-glycerols are the preferred substrate over 1,3-diacyl-sn-glycerols. The enzyme hydrolyzes stearate in preference to palmitate from the sn-1 position of 1,2-diacyl-sn-glycerols (By similarity).</text>
</comment>
<comment type="catalytic activity">
    <reaction evidence="3">
        <text>1-octadecanoyl-2-(5Z,8Z,11Z,14Z-eicosatetraenoyl)-sn-glycerol + H2O = 2-(5Z,8Z,11Z,14Z-eicosatetraenoyl)-glycerol + octadecanoate + H(+)</text>
        <dbReference type="Rhea" id="RHEA:38507"/>
        <dbReference type="ChEBI" id="CHEBI:15377"/>
        <dbReference type="ChEBI" id="CHEBI:15378"/>
        <dbReference type="ChEBI" id="CHEBI:25629"/>
        <dbReference type="ChEBI" id="CHEBI:52392"/>
        <dbReference type="ChEBI" id="CHEBI:75728"/>
    </reaction>
</comment>
<comment type="catalytic activity">
    <reaction evidence="3">
        <text>a 1,2-diacyl-sn-glycerol + H2O = a 2-acylglycerol + a fatty acid + H(+)</text>
        <dbReference type="Rhea" id="RHEA:33275"/>
        <dbReference type="ChEBI" id="CHEBI:15377"/>
        <dbReference type="ChEBI" id="CHEBI:15378"/>
        <dbReference type="ChEBI" id="CHEBI:17389"/>
        <dbReference type="ChEBI" id="CHEBI:17815"/>
        <dbReference type="ChEBI" id="CHEBI:28868"/>
        <dbReference type="EC" id="3.1.1.116"/>
    </reaction>
</comment>
<comment type="catalytic activity">
    <reaction evidence="2">
        <text>a 1,3-diacyl-sn-glycerol + H2O = a 1-acyl-sn-glycerol + a fatty acid + H(+)</text>
        <dbReference type="Rhea" id="RHEA:38503"/>
        <dbReference type="ChEBI" id="CHEBI:15377"/>
        <dbReference type="ChEBI" id="CHEBI:15378"/>
        <dbReference type="ChEBI" id="CHEBI:28868"/>
        <dbReference type="ChEBI" id="CHEBI:64683"/>
        <dbReference type="ChEBI" id="CHEBI:77272"/>
    </reaction>
</comment>
<comment type="catalytic activity">
    <reaction evidence="2">
        <text>1-octadecanoyl-2-(9Z-octadecenoyl)-sn-glycerol + H2O = 2-(9Z-octadecenoyl)-glycerol + octadecanoate + H(+)</text>
        <dbReference type="Rhea" id="RHEA:77103"/>
        <dbReference type="ChEBI" id="CHEBI:15377"/>
        <dbReference type="ChEBI" id="CHEBI:15378"/>
        <dbReference type="ChEBI" id="CHEBI:25629"/>
        <dbReference type="ChEBI" id="CHEBI:73990"/>
        <dbReference type="ChEBI" id="CHEBI:75468"/>
    </reaction>
</comment>
<comment type="catalytic activity">
    <reaction evidence="2">
        <text>1-octadecanoyl-2-(4Z,7Z,10Z,13Z,16Z,19Z-docosahexaenoyl)-sn-glycerol + H2O = 2-(4Z,7Z,10Z,13Z,16Z,19Z-docosahexaenoyl)-glycerol + octadecanoate + H(+)</text>
        <dbReference type="Rhea" id="RHEA:77107"/>
        <dbReference type="ChEBI" id="CHEBI:15377"/>
        <dbReference type="ChEBI" id="CHEBI:15378"/>
        <dbReference type="ChEBI" id="CHEBI:25629"/>
        <dbReference type="ChEBI" id="CHEBI:77129"/>
        <dbReference type="ChEBI" id="CHEBI:186738"/>
    </reaction>
</comment>
<comment type="catalytic activity">
    <reaction evidence="2">
        <text>1,2-didecanoylglycerol + H2O = decanoylglycerol + decanoate + H(+)</text>
        <dbReference type="Rhea" id="RHEA:48596"/>
        <dbReference type="ChEBI" id="CHEBI:11152"/>
        <dbReference type="ChEBI" id="CHEBI:15377"/>
        <dbReference type="ChEBI" id="CHEBI:15378"/>
        <dbReference type="ChEBI" id="CHEBI:27689"/>
        <dbReference type="ChEBI" id="CHEBI:90605"/>
    </reaction>
</comment>
<comment type="subcellular location">
    <subcellularLocation>
        <location evidence="3">Mitochondrion</location>
    </subcellularLocation>
    <subcellularLocation>
        <location evidence="3">Mitochondrion matrix</location>
    </subcellularLocation>
</comment>
<comment type="PTM">
    <text evidence="2">Phosphorylated.</text>
</comment>
<comment type="similarity">
    <text evidence="5">Belongs to the AB hydrolase superfamily.</text>
</comment>
<name>ABHDB_DANRE</name>
<gene>
    <name evidence="3" type="primary">abhd11</name>
    <name type="synonym">wbscr21</name>
</gene>
<sequence>MSNFAMSALCRVFTRGAPCGLSSCSSVTGLRDFCSGVSRLDRAGSDSMRTASPVNLTYDVFDGKGDSTPLVFLHGLFGSKSNFHSIAKSLVQRTGRKVLTIDARNHGKSPHSPVLTYDTMTSDLTHLLGQLHIGKCVLIGHSMGGKVAMTTALSQPNLVERLVVVDISPSLTSAHTNFHAYIQAMKEVKIPSDIPRSTARRLAEDQLRKIVKERSVRQFLLTNLEEQNGQYGWRINLESISNHLEDILGFPEFDTTYEGPTLFLGGSSSAYISSDDYPEIQRLFPCADIQYIPDASHWIHADKPLDFISSIITFLQP</sequence>
<proteinExistence type="evidence at transcript level"/>
<accession>Q6DRD9</accession>
<accession>A3KNU8</accession>
<evidence type="ECO:0000250" key="1"/>
<evidence type="ECO:0000250" key="2">
    <source>
        <dbReference type="UniProtKB" id="Q3SZ73"/>
    </source>
</evidence>
<evidence type="ECO:0000250" key="3">
    <source>
        <dbReference type="UniProtKB" id="Q8NFV4"/>
    </source>
</evidence>
<evidence type="ECO:0000255" key="4"/>
<evidence type="ECO:0000305" key="5"/>
<organism>
    <name type="scientific">Danio rerio</name>
    <name type="common">Zebrafish</name>
    <name type="synonym">Brachydanio rerio</name>
    <dbReference type="NCBI Taxonomy" id="7955"/>
    <lineage>
        <taxon>Eukaryota</taxon>
        <taxon>Metazoa</taxon>
        <taxon>Chordata</taxon>
        <taxon>Craniata</taxon>
        <taxon>Vertebrata</taxon>
        <taxon>Euteleostomi</taxon>
        <taxon>Actinopterygii</taxon>
        <taxon>Neopterygii</taxon>
        <taxon>Teleostei</taxon>
        <taxon>Ostariophysi</taxon>
        <taxon>Cypriniformes</taxon>
        <taxon>Danionidae</taxon>
        <taxon>Danioninae</taxon>
        <taxon>Danio</taxon>
    </lineage>
</organism>
<feature type="transit peptide" description="Mitochondrion" evidence="4">
    <location>
        <begin position="1"/>
        <end position="20"/>
    </location>
</feature>
<feature type="chain" id="PRO_0000281005" description="sn-1-specific diacylglycerol lipase ABHD11">
    <location>
        <begin position="21"/>
        <end position="317"/>
    </location>
</feature>
<feature type="domain" description="AB hydrolase-1" evidence="4">
    <location>
        <begin position="69"/>
        <end position="304"/>
    </location>
</feature>
<feature type="active site" description="Charge relay system" evidence="1">
    <location>
        <position position="142"/>
    </location>
</feature>
<feature type="active site" description="Charge relay system" evidence="1">
    <location>
        <position position="238"/>
    </location>
</feature>
<feature type="active site" description="Charge relay system" evidence="1">
    <location>
        <position position="297"/>
    </location>
</feature>
<protein>
    <recommendedName>
        <fullName evidence="5">sn-1-specific diacylglycerol lipase ABHD11</fullName>
        <ecNumber evidence="3">3.1.1.116</ecNumber>
    </recommendedName>
    <alternativeName>
        <fullName evidence="5">Alpha/beta hydrolase domain-containing protein 11</fullName>
        <shortName evidence="3">Abhydrolase domain-containing protein 11</shortName>
    </alternativeName>
    <alternativeName>
        <fullName>Williams-Beuren syndrome chromosomal region 21 protein homolog</fullName>
    </alternativeName>
</protein>
<reference key="1">
    <citation type="journal article" date="2004" name="Proc. Natl. Acad. Sci. U.S.A.">
        <title>Identification of 315 genes essential for early zebrafish development.</title>
        <authorList>
            <person name="Amsterdam A."/>
            <person name="Nissen R.M."/>
            <person name="Sun Z."/>
            <person name="Swindell E.C."/>
            <person name="Farrington S."/>
            <person name="Hopkins N."/>
        </authorList>
    </citation>
    <scope>NUCLEOTIDE SEQUENCE [LARGE SCALE MRNA]</scope>
    <source>
        <tissue>Embryo</tissue>
    </source>
</reference>
<reference key="2">
    <citation type="submission" date="2007-03" db="EMBL/GenBank/DDBJ databases">
        <authorList>
            <consortium name="NIH - Zebrafish Gene Collection (ZGC) project"/>
        </authorList>
    </citation>
    <scope>NUCLEOTIDE SEQUENCE [LARGE SCALE MRNA]</scope>
    <source>
        <tissue>Embryo</tissue>
    </source>
</reference>
<dbReference type="EC" id="3.1.1.116" evidence="3"/>
<dbReference type="EMBL" id="AY648820">
    <property type="protein sequence ID" value="AAT68138.1"/>
    <property type="molecule type" value="mRNA"/>
</dbReference>
<dbReference type="EMBL" id="BC134019">
    <property type="protein sequence ID" value="AAI34020.1"/>
    <property type="molecule type" value="mRNA"/>
</dbReference>
<dbReference type="RefSeq" id="NP_001004290.1">
    <property type="nucleotide sequence ID" value="NM_001004290.2"/>
</dbReference>
<dbReference type="SMR" id="Q6DRD9"/>
<dbReference type="FunCoup" id="Q6DRD9">
    <property type="interactions" value="2066"/>
</dbReference>
<dbReference type="STRING" id="7955.ENSDARP00000091982"/>
<dbReference type="ESTHER" id="danre-q6drd9">
    <property type="family name" value="ABHD11-Acetyl_transferase"/>
</dbReference>
<dbReference type="PaxDb" id="7955-ENSDARP00000091982"/>
<dbReference type="Ensembl" id="ENSDART00000101208">
    <property type="protein sequence ID" value="ENSDARP00000091982"/>
    <property type="gene ID" value="ENSDARG00000069501"/>
</dbReference>
<dbReference type="GeneID" id="446169"/>
<dbReference type="KEGG" id="dre:446169"/>
<dbReference type="AGR" id="ZFIN:ZDB-GENE-040909-1"/>
<dbReference type="CTD" id="83451"/>
<dbReference type="ZFIN" id="ZDB-GENE-040909-1">
    <property type="gene designation" value="abhd11"/>
</dbReference>
<dbReference type="eggNOG" id="KOG2382">
    <property type="taxonomic scope" value="Eukaryota"/>
</dbReference>
<dbReference type="HOGENOM" id="CLU_020336_53_0_1"/>
<dbReference type="InParanoid" id="Q6DRD9"/>
<dbReference type="OMA" id="FLGMSDN"/>
<dbReference type="OrthoDB" id="8119704at2759"/>
<dbReference type="PhylomeDB" id="Q6DRD9"/>
<dbReference type="TreeFam" id="TF314071"/>
<dbReference type="PRO" id="PR:Q6DRD9"/>
<dbReference type="Proteomes" id="UP000000437">
    <property type="component" value="Chromosome 21"/>
</dbReference>
<dbReference type="Bgee" id="ENSDARG00000069501">
    <property type="expression patterns" value="Expressed in brain and 20 other cell types or tissues"/>
</dbReference>
<dbReference type="GO" id="GO:0005759">
    <property type="term" value="C:mitochondrial matrix"/>
    <property type="evidence" value="ECO:0000250"/>
    <property type="project" value="UniProtKB"/>
</dbReference>
<dbReference type="GO" id="GO:0005739">
    <property type="term" value="C:mitochondrion"/>
    <property type="evidence" value="ECO:0000250"/>
    <property type="project" value="UniProtKB"/>
</dbReference>
<dbReference type="GO" id="GO:0045252">
    <property type="term" value="C:oxoglutarate dehydrogenase complex"/>
    <property type="evidence" value="ECO:0000250"/>
    <property type="project" value="UniProtKB"/>
</dbReference>
<dbReference type="GO" id="GO:0052689">
    <property type="term" value="F:carboxylic ester hydrolase activity"/>
    <property type="evidence" value="ECO:0000318"/>
    <property type="project" value="GO_Central"/>
</dbReference>
<dbReference type="GO" id="GO:0016298">
    <property type="term" value="F:lipase activity"/>
    <property type="evidence" value="ECO:0000250"/>
    <property type="project" value="UniProtKB"/>
</dbReference>
<dbReference type="GO" id="GO:0006629">
    <property type="term" value="P:lipid metabolic process"/>
    <property type="evidence" value="ECO:0000318"/>
    <property type="project" value="GO_Central"/>
</dbReference>
<dbReference type="FunFam" id="3.40.50.1820:FF:000039">
    <property type="entry name" value="Esterase ybfF"/>
    <property type="match status" value="1"/>
</dbReference>
<dbReference type="Gene3D" id="3.40.50.1820">
    <property type="entry name" value="alpha/beta hydrolase"/>
    <property type="match status" value="1"/>
</dbReference>
<dbReference type="InterPro" id="IPR000073">
    <property type="entry name" value="AB_hydrolase_1"/>
</dbReference>
<dbReference type="InterPro" id="IPR029058">
    <property type="entry name" value="AB_hydrolase_fold"/>
</dbReference>
<dbReference type="PANTHER" id="PTHR46118">
    <property type="entry name" value="PROTEIN ABHD11"/>
    <property type="match status" value="1"/>
</dbReference>
<dbReference type="PANTHER" id="PTHR46118:SF4">
    <property type="entry name" value="PROTEIN ABHD11"/>
    <property type="match status" value="1"/>
</dbReference>
<dbReference type="Pfam" id="PF00561">
    <property type="entry name" value="Abhydrolase_1"/>
    <property type="match status" value="1"/>
</dbReference>
<dbReference type="PRINTS" id="PR00111">
    <property type="entry name" value="ABHYDROLASE"/>
</dbReference>
<dbReference type="SUPFAM" id="SSF53474">
    <property type="entry name" value="alpha/beta-Hydrolases"/>
    <property type="match status" value="1"/>
</dbReference>